<accession>Q113E7</accession>
<name>HIS5_TRIEI</name>
<dbReference type="EC" id="4.3.2.10" evidence="1"/>
<dbReference type="EC" id="3.5.1.2" evidence="1"/>
<dbReference type="EMBL" id="CP000393">
    <property type="protein sequence ID" value="ABG51377.1"/>
    <property type="molecule type" value="Genomic_DNA"/>
</dbReference>
<dbReference type="RefSeq" id="WP_011611747.1">
    <property type="nucleotide sequence ID" value="NC_008312.1"/>
</dbReference>
<dbReference type="SMR" id="Q113E7"/>
<dbReference type="STRING" id="203124.Tery_2143"/>
<dbReference type="KEGG" id="ter:Tery_2143"/>
<dbReference type="eggNOG" id="COG0118">
    <property type="taxonomic scope" value="Bacteria"/>
</dbReference>
<dbReference type="HOGENOM" id="CLU_071837_2_2_3"/>
<dbReference type="OrthoDB" id="9807137at2"/>
<dbReference type="UniPathway" id="UPA00031">
    <property type="reaction ID" value="UER00010"/>
</dbReference>
<dbReference type="GO" id="GO:0005737">
    <property type="term" value="C:cytoplasm"/>
    <property type="evidence" value="ECO:0007669"/>
    <property type="project" value="UniProtKB-SubCell"/>
</dbReference>
<dbReference type="GO" id="GO:0004359">
    <property type="term" value="F:glutaminase activity"/>
    <property type="evidence" value="ECO:0007669"/>
    <property type="project" value="UniProtKB-EC"/>
</dbReference>
<dbReference type="GO" id="GO:0000107">
    <property type="term" value="F:imidazoleglycerol-phosphate synthase activity"/>
    <property type="evidence" value="ECO:0007669"/>
    <property type="project" value="UniProtKB-UniRule"/>
</dbReference>
<dbReference type="GO" id="GO:0016829">
    <property type="term" value="F:lyase activity"/>
    <property type="evidence" value="ECO:0007669"/>
    <property type="project" value="UniProtKB-KW"/>
</dbReference>
<dbReference type="GO" id="GO:0000105">
    <property type="term" value="P:L-histidine biosynthetic process"/>
    <property type="evidence" value="ECO:0007669"/>
    <property type="project" value="UniProtKB-UniRule"/>
</dbReference>
<dbReference type="CDD" id="cd01748">
    <property type="entry name" value="GATase1_IGP_Synthase"/>
    <property type="match status" value="1"/>
</dbReference>
<dbReference type="FunFam" id="3.40.50.880:FF:000009">
    <property type="entry name" value="Imidazole glycerol phosphate synthase subunit HisH"/>
    <property type="match status" value="1"/>
</dbReference>
<dbReference type="Gene3D" id="3.40.50.880">
    <property type="match status" value="1"/>
</dbReference>
<dbReference type="HAMAP" id="MF_00278">
    <property type="entry name" value="HisH"/>
    <property type="match status" value="1"/>
</dbReference>
<dbReference type="InterPro" id="IPR029062">
    <property type="entry name" value="Class_I_gatase-like"/>
</dbReference>
<dbReference type="InterPro" id="IPR017926">
    <property type="entry name" value="GATASE"/>
</dbReference>
<dbReference type="InterPro" id="IPR010139">
    <property type="entry name" value="Imidazole-glycPsynth_HisH"/>
</dbReference>
<dbReference type="NCBIfam" id="TIGR01855">
    <property type="entry name" value="IMP_synth_hisH"/>
    <property type="match status" value="1"/>
</dbReference>
<dbReference type="PANTHER" id="PTHR42701">
    <property type="entry name" value="IMIDAZOLE GLYCEROL PHOSPHATE SYNTHASE SUBUNIT HISH"/>
    <property type="match status" value="1"/>
</dbReference>
<dbReference type="PANTHER" id="PTHR42701:SF1">
    <property type="entry name" value="IMIDAZOLE GLYCEROL PHOSPHATE SYNTHASE SUBUNIT HISH"/>
    <property type="match status" value="1"/>
</dbReference>
<dbReference type="Pfam" id="PF00117">
    <property type="entry name" value="GATase"/>
    <property type="match status" value="1"/>
</dbReference>
<dbReference type="PIRSF" id="PIRSF000495">
    <property type="entry name" value="Amidotransf_hisH"/>
    <property type="match status" value="1"/>
</dbReference>
<dbReference type="SUPFAM" id="SSF52317">
    <property type="entry name" value="Class I glutamine amidotransferase-like"/>
    <property type="match status" value="1"/>
</dbReference>
<dbReference type="PROSITE" id="PS51273">
    <property type="entry name" value="GATASE_TYPE_1"/>
    <property type="match status" value="1"/>
</dbReference>
<feature type="chain" id="PRO_1000114798" description="Imidazole glycerol phosphate synthase subunit HisH">
    <location>
        <begin position="1"/>
        <end position="214"/>
    </location>
</feature>
<feature type="domain" description="Glutamine amidotransferase type-1" evidence="1">
    <location>
        <begin position="3"/>
        <end position="211"/>
    </location>
</feature>
<feature type="active site" description="Nucleophile" evidence="1">
    <location>
        <position position="81"/>
    </location>
</feature>
<feature type="active site" evidence="1">
    <location>
        <position position="186"/>
    </location>
</feature>
<feature type="active site" evidence="1">
    <location>
        <position position="188"/>
    </location>
</feature>
<gene>
    <name evidence="1" type="primary">hisH</name>
    <name type="ordered locus">Tery_2143</name>
</gene>
<protein>
    <recommendedName>
        <fullName evidence="1">Imidazole glycerol phosphate synthase subunit HisH</fullName>
        <ecNumber evidence="1">4.3.2.10</ecNumber>
    </recommendedName>
    <alternativeName>
        <fullName evidence="1">IGP synthase glutaminase subunit</fullName>
        <ecNumber evidence="1">3.5.1.2</ecNumber>
    </alternativeName>
    <alternativeName>
        <fullName evidence="1">IGP synthase subunit HisH</fullName>
    </alternativeName>
    <alternativeName>
        <fullName evidence="1">ImGP synthase subunit HisH</fullName>
        <shortName evidence="1">IGPS subunit HisH</shortName>
    </alternativeName>
</protein>
<evidence type="ECO:0000255" key="1">
    <source>
        <dbReference type="HAMAP-Rule" id="MF_00278"/>
    </source>
</evidence>
<reference key="1">
    <citation type="journal article" date="2015" name="Proc. Natl. Acad. Sci. U.S.A.">
        <title>Trichodesmium genome maintains abundant, widespread noncoding DNA in situ, despite oligotrophic lifestyle.</title>
        <authorList>
            <person name="Walworth N."/>
            <person name="Pfreundt U."/>
            <person name="Nelson W.C."/>
            <person name="Mincer T."/>
            <person name="Heidelberg J.F."/>
            <person name="Fu F."/>
            <person name="Waterbury J.B."/>
            <person name="Glavina del Rio T."/>
            <person name="Goodwin L."/>
            <person name="Kyrpides N.C."/>
            <person name="Land M.L."/>
            <person name="Woyke T."/>
            <person name="Hutchins D.A."/>
            <person name="Hess W.R."/>
            <person name="Webb E.A."/>
        </authorList>
    </citation>
    <scope>NUCLEOTIDE SEQUENCE [LARGE SCALE GENOMIC DNA]</scope>
    <source>
        <strain>IMS101</strain>
    </source>
</reference>
<keyword id="KW-0028">Amino-acid biosynthesis</keyword>
<keyword id="KW-0963">Cytoplasm</keyword>
<keyword id="KW-0315">Glutamine amidotransferase</keyword>
<keyword id="KW-0368">Histidine biosynthesis</keyword>
<keyword id="KW-0378">Hydrolase</keyword>
<keyword id="KW-0456">Lyase</keyword>
<proteinExistence type="inferred from homology"/>
<comment type="function">
    <text evidence="1">IGPS catalyzes the conversion of PRFAR and glutamine to IGP, AICAR and glutamate. The HisH subunit catalyzes the hydrolysis of glutamine to glutamate and ammonia as part of the synthesis of IGP and AICAR. The resulting ammonia molecule is channeled to the active site of HisF.</text>
</comment>
<comment type="catalytic activity">
    <reaction evidence="1">
        <text>5-[(5-phospho-1-deoxy-D-ribulos-1-ylimino)methylamino]-1-(5-phospho-beta-D-ribosyl)imidazole-4-carboxamide + L-glutamine = D-erythro-1-(imidazol-4-yl)glycerol 3-phosphate + 5-amino-1-(5-phospho-beta-D-ribosyl)imidazole-4-carboxamide + L-glutamate + H(+)</text>
        <dbReference type="Rhea" id="RHEA:24793"/>
        <dbReference type="ChEBI" id="CHEBI:15378"/>
        <dbReference type="ChEBI" id="CHEBI:29985"/>
        <dbReference type="ChEBI" id="CHEBI:58278"/>
        <dbReference type="ChEBI" id="CHEBI:58359"/>
        <dbReference type="ChEBI" id="CHEBI:58475"/>
        <dbReference type="ChEBI" id="CHEBI:58525"/>
        <dbReference type="EC" id="4.3.2.10"/>
    </reaction>
</comment>
<comment type="catalytic activity">
    <reaction evidence="1">
        <text>L-glutamine + H2O = L-glutamate + NH4(+)</text>
        <dbReference type="Rhea" id="RHEA:15889"/>
        <dbReference type="ChEBI" id="CHEBI:15377"/>
        <dbReference type="ChEBI" id="CHEBI:28938"/>
        <dbReference type="ChEBI" id="CHEBI:29985"/>
        <dbReference type="ChEBI" id="CHEBI:58359"/>
        <dbReference type="EC" id="3.5.1.2"/>
    </reaction>
</comment>
<comment type="pathway">
    <text evidence="1">Amino-acid biosynthesis; L-histidine biosynthesis; L-histidine from 5-phospho-alpha-D-ribose 1-diphosphate: step 5/9.</text>
</comment>
<comment type="subunit">
    <text evidence="1">Heterodimer of HisH and HisF.</text>
</comment>
<comment type="subcellular location">
    <subcellularLocation>
        <location evidence="1">Cytoplasm</location>
    </subcellularLocation>
</comment>
<organism>
    <name type="scientific">Trichodesmium erythraeum (strain IMS101)</name>
    <dbReference type="NCBI Taxonomy" id="203124"/>
    <lineage>
        <taxon>Bacteria</taxon>
        <taxon>Bacillati</taxon>
        <taxon>Cyanobacteriota</taxon>
        <taxon>Cyanophyceae</taxon>
        <taxon>Oscillatoriophycideae</taxon>
        <taxon>Oscillatoriales</taxon>
        <taxon>Microcoleaceae</taxon>
        <taxon>Trichodesmium</taxon>
    </lineage>
</organism>
<sequence>MSTIAVIDYDMGNLHSVCKGLEKAGATPKITDSSIEIDKADAVILPGVGSFDPAVQHLRTRNLEIPIKQVIASGKPFLGICLGLQILFESSEEGQEPGLGIFAGKVCRFKSEPGLTIPQMGWNKLQFTQPEHLLWSEIGSQPWVYFVHSYYVDPTDSQVTAATVTHGHQTVTAAVGKDNLIAVQFHPEKSSTAGLKILSNFVSKVIPKNLALAS</sequence>